<name>NDK_RICAH</name>
<dbReference type="EC" id="2.7.4.6" evidence="1"/>
<dbReference type="EMBL" id="CP000847">
    <property type="protein sequence ID" value="ABV74423.1"/>
    <property type="molecule type" value="Genomic_DNA"/>
</dbReference>
<dbReference type="RefSeq" id="WP_012013293.1">
    <property type="nucleotide sequence ID" value="NC_009881.1"/>
</dbReference>
<dbReference type="SMR" id="A8GLZ8"/>
<dbReference type="STRING" id="293614.A1C_00450"/>
<dbReference type="KEGG" id="rak:A1C_00450"/>
<dbReference type="eggNOG" id="COG0105">
    <property type="taxonomic scope" value="Bacteria"/>
</dbReference>
<dbReference type="HOGENOM" id="CLU_060216_8_1_5"/>
<dbReference type="Proteomes" id="UP000006830">
    <property type="component" value="Chromosome"/>
</dbReference>
<dbReference type="GO" id="GO:0005737">
    <property type="term" value="C:cytoplasm"/>
    <property type="evidence" value="ECO:0007669"/>
    <property type="project" value="UniProtKB-SubCell"/>
</dbReference>
<dbReference type="GO" id="GO:0005524">
    <property type="term" value="F:ATP binding"/>
    <property type="evidence" value="ECO:0007669"/>
    <property type="project" value="UniProtKB-UniRule"/>
</dbReference>
<dbReference type="GO" id="GO:0046872">
    <property type="term" value="F:metal ion binding"/>
    <property type="evidence" value="ECO:0007669"/>
    <property type="project" value="UniProtKB-KW"/>
</dbReference>
<dbReference type="GO" id="GO:0004550">
    <property type="term" value="F:nucleoside diphosphate kinase activity"/>
    <property type="evidence" value="ECO:0007669"/>
    <property type="project" value="UniProtKB-UniRule"/>
</dbReference>
<dbReference type="GO" id="GO:0006241">
    <property type="term" value="P:CTP biosynthetic process"/>
    <property type="evidence" value="ECO:0007669"/>
    <property type="project" value="UniProtKB-UniRule"/>
</dbReference>
<dbReference type="GO" id="GO:0006183">
    <property type="term" value="P:GTP biosynthetic process"/>
    <property type="evidence" value="ECO:0007669"/>
    <property type="project" value="UniProtKB-UniRule"/>
</dbReference>
<dbReference type="GO" id="GO:0006228">
    <property type="term" value="P:UTP biosynthetic process"/>
    <property type="evidence" value="ECO:0007669"/>
    <property type="project" value="UniProtKB-UniRule"/>
</dbReference>
<dbReference type="CDD" id="cd04413">
    <property type="entry name" value="NDPk_I"/>
    <property type="match status" value="1"/>
</dbReference>
<dbReference type="FunFam" id="3.30.70.141:FF:000003">
    <property type="entry name" value="Nucleoside diphosphate kinase"/>
    <property type="match status" value="1"/>
</dbReference>
<dbReference type="Gene3D" id="3.30.70.141">
    <property type="entry name" value="Nucleoside diphosphate kinase-like domain"/>
    <property type="match status" value="1"/>
</dbReference>
<dbReference type="HAMAP" id="MF_00451">
    <property type="entry name" value="NDP_kinase"/>
    <property type="match status" value="1"/>
</dbReference>
<dbReference type="InterPro" id="IPR034907">
    <property type="entry name" value="NDK-like_dom"/>
</dbReference>
<dbReference type="InterPro" id="IPR036850">
    <property type="entry name" value="NDK-like_dom_sf"/>
</dbReference>
<dbReference type="InterPro" id="IPR001564">
    <property type="entry name" value="Nucleoside_diP_kinase"/>
</dbReference>
<dbReference type="InterPro" id="IPR023005">
    <property type="entry name" value="Nucleoside_diP_kinase_AS"/>
</dbReference>
<dbReference type="NCBIfam" id="NF001908">
    <property type="entry name" value="PRK00668.1"/>
    <property type="match status" value="1"/>
</dbReference>
<dbReference type="PANTHER" id="PTHR46161">
    <property type="entry name" value="NUCLEOSIDE DIPHOSPHATE KINASE"/>
    <property type="match status" value="1"/>
</dbReference>
<dbReference type="PANTHER" id="PTHR46161:SF3">
    <property type="entry name" value="NUCLEOSIDE DIPHOSPHATE KINASE DDB_G0292928-RELATED"/>
    <property type="match status" value="1"/>
</dbReference>
<dbReference type="Pfam" id="PF00334">
    <property type="entry name" value="NDK"/>
    <property type="match status" value="1"/>
</dbReference>
<dbReference type="PRINTS" id="PR01243">
    <property type="entry name" value="NUCDPKINASE"/>
</dbReference>
<dbReference type="SMART" id="SM00562">
    <property type="entry name" value="NDK"/>
    <property type="match status" value="1"/>
</dbReference>
<dbReference type="SUPFAM" id="SSF54919">
    <property type="entry name" value="Nucleoside diphosphate kinase, NDK"/>
    <property type="match status" value="1"/>
</dbReference>
<dbReference type="PROSITE" id="PS00469">
    <property type="entry name" value="NDPK"/>
    <property type="match status" value="1"/>
</dbReference>
<dbReference type="PROSITE" id="PS51374">
    <property type="entry name" value="NDPK_LIKE"/>
    <property type="match status" value="1"/>
</dbReference>
<comment type="function">
    <text evidence="1">Major role in the synthesis of nucleoside triphosphates other than ATP. The ATP gamma phosphate is transferred to the NDP beta phosphate via a ping-pong mechanism, using a phosphorylated active-site intermediate.</text>
</comment>
<comment type="catalytic activity">
    <reaction evidence="1">
        <text>a 2'-deoxyribonucleoside 5'-diphosphate + ATP = a 2'-deoxyribonucleoside 5'-triphosphate + ADP</text>
        <dbReference type="Rhea" id="RHEA:44640"/>
        <dbReference type="ChEBI" id="CHEBI:30616"/>
        <dbReference type="ChEBI" id="CHEBI:61560"/>
        <dbReference type="ChEBI" id="CHEBI:73316"/>
        <dbReference type="ChEBI" id="CHEBI:456216"/>
        <dbReference type="EC" id="2.7.4.6"/>
    </reaction>
</comment>
<comment type="catalytic activity">
    <reaction evidence="1">
        <text>a ribonucleoside 5'-diphosphate + ATP = a ribonucleoside 5'-triphosphate + ADP</text>
        <dbReference type="Rhea" id="RHEA:18113"/>
        <dbReference type="ChEBI" id="CHEBI:30616"/>
        <dbReference type="ChEBI" id="CHEBI:57930"/>
        <dbReference type="ChEBI" id="CHEBI:61557"/>
        <dbReference type="ChEBI" id="CHEBI:456216"/>
        <dbReference type="EC" id="2.7.4.6"/>
    </reaction>
</comment>
<comment type="cofactor">
    <cofactor evidence="1">
        <name>Mg(2+)</name>
        <dbReference type="ChEBI" id="CHEBI:18420"/>
    </cofactor>
</comment>
<comment type="subunit">
    <text evidence="1">Homotetramer.</text>
</comment>
<comment type="subcellular location">
    <subcellularLocation>
        <location evidence="1">Cytoplasm</location>
    </subcellularLocation>
</comment>
<comment type="similarity">
    <text evidence="1">Belongs to the NDK family.</text>
</comment>
<reference key="1">
    <citation type="submission" date="2007-09" db="EMBL/GenBank/DDBJ databases">
        <title>Complete genome sequence of Rickettsia akari.</title>
        <authorList>
            <person name="Madan A."/>
            <person name="Fahey J."/>
            <person name="Helton E."/>
            <person name="Ketteman M."/>
            <person name="Madan A."/>
            <person name="Rodrigues S."/>
            <person name="Sanchez A."/>
            <person name="Whiting M."/>
            <person name="Dasch G."/>
            <person name="Eremeeva M."/>
        </authorList>
    </citation>
    <scope>NUCLEOTIDE SEQUENCE [LARGE SCALE GENOMIC DNA]</scope>
    <source>
        <strain>Hartford</strain>
    </source>
</reference>
<evidence type="ECO:0000255" key="1">
    <source>
        <dbReference type="HAMAP-Rule" id="MF_00451"/>
    </source>
</evidence>
<sequence length="140" mass="15704">MTIQYTFSMIKPDAIKRNKIGQVNAYLENGGLKIVAQKMRFLTKYEAECFYDEHRARTFFNSLVEYITSGAVVLQVLKGEDAIILNRTIMGATNPAEAEAGTIRKDLGESIEANSIHGSDSENSAKREIAFFFNKSEIIE</sequence>
<accession>A8GLZ8</accession>
<keyword id="KW-0067">ATP-binding</keyword>
<keyword id="KW-0963">Cytoplasm</keyword>
<keyword id="KW-0418">Kinase</keyword>
<keyword id="KW-0460">Magnesium</keyword>
<keyword id="KW-0479">Metal-binding</keyword>
<keyword id="KW-0546">Nucleotide metabolism</keyword>
<keyword id="KW-0547">Nucleotide-binding</keyword>
<keyword id="KW-0597">Phosphoprotein</keyword>
<keyword id="KW-0808">Transferase</keyword>
<protein>
    <recommendedName>
        <fullName evidence="1">Nucleoside diphosphate kinase</fullName>
        <shortName evidence="1">NDK</shortName>
        <shortName evidence="1">NDP kinase</shortName>
        <ecNumber evidence="1">2.7.4.6</ecNumber>
    </recommendedName>
    <alternativeName>
        <fullName evidence="1">Nucleoside-2-P kinase</fullName>
    </alternativeName>
</protein>
<feature type="chain" id="PRO_1000026285" description="Nucleoside diphosphate kinase">
    <location>
        <begin position="1"/>
        <end position="140"/>
    </location>
</feature>
<feature type="active site" description="Pros-phosphohistidine intermediate" evidence="1">
    <location>
        <position position="117"/>
    </location>
</feature>
<feature type="binding site" evidence="1">
    <location>
        <position position="11"/>
    </location>
    <ligand>
        <name>ATP</name>
        <dbReference type="ChEBI" id="CHEBI:30616"/>
    </ligand>
</feature>
<feature type="binding site" evidence="1">
    <location>
        <position position="59"/>
    </location>
    <ligand>
        <name>ATP</name>
        <dbReference type="ChEBI" id="CHEBI:30616"/>
    </ligand>
</feature>
<feature type="binding site" evidence="1">
    <location>
        <position position="87"/>
    </location>
    <ligand>
        <name>ATP</name>
        <dbReference type="ChEBI" id="CHEBI:30616"/>
    </ligand>
</feature>
<feature type="binding site" evidence="1">
    <location>
        <position position="93"/>
    </location>
    <ligand>
        <name>ATP</name>
        <dbReference type="ChEBI" id="CHEBI:30616"/>
    </ligand>
</feature>
<feature type="binding site" evidence="1">
    <location>
        <position position="104"/>
    </location>
    <ligand>
        <name>ATP</name>
        <dbReference type="ChEBI" id="CHEBI:30616"/>
    </ligand>
</feature>
<feature type="binding site" evidence="1">
    <location>
        <position position="114"/>
    </location>
    <ligand>
        <name>ATP</name>
        <dbReference type="ChEBI" id="CHEBI:30616"/>
    </ligand>
</feature>
<proteinExistence type="inferred from homology"/>
<organism>
    <name type="scientific">Rickettsia akari (strain Hartford)</name>
    <dbReference type="NCBI Taxonomy" id="293614"/>
    <lineage>
        <taxon>Bacteria</taxon>
        <taxon>Pseudomonadati</taxon>
        <taxon>Pseudomonadota</taxon>
        <taxon>Alphaproteobacteria</taxon>
        <taxon>Rickettsiales</taxon>
        <taxon>Rickettsiaceae</taxon>
        <taxon>Rickettsieae</taxon>
        <taxon>Rickettsia</taxon>
        <taxon>spotted fever group</taxon>
    </lineage>
</organism>
<gene>
    <name evidence="1" type="primary">ndk</name>
    <name type="ordered locus">A1C_00450</name>
</gene>